<proteinExistence type="inferred from homology"/>
<reference key="1">
    <citation type="submission" date="2003-03" db="EMBL/GenBank/DDBJ databases">
        <title>African swine fever virus genomes.</title>
        <authorList>
            <person name="Kutish G.F."/>
            <person name="Rock D.L."/>
        </authorList>
    </citation>
    <scope>NUCLEOTIDE SEQUENCE [LARGE SCALE GENOMIC DNA]</scope>
</reference>
<comment type="function">
    <text evidence="2 3">Error-prone polymerase lacking a proofreading 3'-5' exonuclease which catalyzes the gap-filling reaction during the DNA repair process (By similarity). Specifically binds intermediates in the single-nucleotide base-excision repair process (By similarity). Also catalyzes DNA polymerization with low nucleotide-insertion fidelity (By similarity). Probably acts as a strategic DNA mutase, which gives rise to a rapid emergence of variants (By similarity). Generates mismatched G-G pairs, in that case, the polymerase first binds the deoxynucleotide followed by mismatch formation (By similarity). Together with the viral DNA ligase, fills the single nucleotide gaps generated by the AP endonuclease (Probable). Binds DNA with high affinity via the helix alphaE (By similarity).</text>
</comment>
<comment type="catalytic activity">
    <reaction evidence="2">
        <text>DNA(n) + a 2'-deoxyribonucleoside 5'-triphosphate = DNA(n+1) + diphosphate</text>
        <dbReference type="Rhea" id="RHEA:22508"/>
        <dbReference type="Rhea" id="RHEA-COMP:17339"/>
        <dbReference type="Rhea" id="RHEA-COMP:17340"/>
        <dbReference type="ChEBI" id="CHEBI:33019"/>
        <dbReference type="ChEBI" id="CHEBI:61560"/>
        <dbReference type="ChEBI" id="CHEBI:173112"/>
        <dbReference type="EC" id="2.7.7.7"/>
    </reaction>
</comment>
<comment type="cofactor">
    <cofactor evidence="2">
        <name>Mg(2+)</name>
        <dbReference type="ChEBI" id="CHEBI:18420"/>
    </cofactor>
    <text>In the presence of magnesium, pol X shows a strong preference for the ssDNA gaps having one and two nucleotides.</text>
</comment>
<comment type="subcellular location">
    <subcellularLocation>
        <location evidence="2">Virion</location>
    </subcellularLocation>
    <text evidence="2">Found in association with viral nucleoid.</text>
</comment>
<comment type="domain">
    <text evidence="2">Small DNA polymerase formed from only a palm and a C-terminal subdomain (By similarity). The total DNA-binding site of pol X is composed of two DNA-binding subsites (By similarity).</text>
</comment>
<comment type="miscellaneous">
    <text evidence="3">Consistent with its intracellular location, ASFV encodes its own replicative DNA polymerase and three base excision repair enzymes: a class II AP endonuclease, the repair polymerase Pol X, and an ATP-dependent DNA ligase.</text>
</comment>
<comment type="similarity">
    <text evidence="3">Belongs to the DNA polymerase type-X family.</text>
</comment>
<protein>
    <recommendedName>
        <fullName>Repair DNA polymerase X</fullName>
        <shortName>Pol X</shortName>
        <ecNumber evidence="2">2.7.7.7</ecNumber>
    </recommendedName>
</protein>
<accession>P0C984</accession>
<feature type="chain" id="PRO_0000373083" description="Repair DNA polymerase X">
    <location>
        <begin position="1"/>
        <end position="174"/>
    </location>
</feature>
<feature type="region of interest" description="Involved in ssDNA binding" evidence="1">
    <location>
        <begin position="42"/>
        <end position="51"/>
    </location>
</feature>
<feature type="binding site" evidence="2">
    <location>
        <position position="49"/>
    </location>
    <ligand>
        <name>Mg(2+)</name>
        <dbReference type="ChEBI" id="CHEBI:18420"/>
    </ligand>
</feature>
<feature type="binding site" evidence="2">
    <location>
        <position position="51"/>
    </location>
    <ligand>
        <name>Mg(2+)</name>
        <dbReference type="ChEBI" id="CHEBI:18420"/>
    </ligand>
</feature>
<feature type="binding site" evidence="2">
    <location>
        <position position="100"/>
    </location>
    <ligand>
        <name>Mg(2+)</name>
        <dbReference type="ChEBI" id="CHEBI:18420"/>
    </ligand>
</feature>
<feature type="site" description="Stabilizes dGTP in a syn conformation to overcome the Watson-Crick base pairing constraint" evidence="2">
    <location>
        <position position="115"/>
    </location>
</feature>
<feature type="disulfide bond" evidence="2">
    <location>
        <begin position="81"/>
        <end position="86"/>
    </location>
</feature>
<gene>
    <name type="ordered locus">Mal-105</name>
</gene>
<name>DPOLX_ASFM2</name>
<organism>
    <name type="scientific">African swine fever virus (isolate Tick/Malawi/Lil 20-1/1983)</name>
    <name type="common">ASFV</name>
    <dbReference type="NCBI Taxonomy" id="10500"/>
    <lineage>
        <taxon>Viruses</taxon>
        <taxon>Varidnaviria</taxon>
        <taxon>Bamfordvirae</taxon>
        <taxon>Nucleocytoviricota</taxon>
        <taxon>Pokkesviricetes</taxon>
        <taxon>Asfuvirales</taxon>
        <taxon>Asfarviridae</taxon>
        <taxon>Asfivirus</taxon>
        <taxon>African swine fever virus</taxon>
    </lineage>
</organism>
<evidence type="ECO:0000250" key="1"/>
<evidence type="ECO:0000250" key="2">
    <source>
        <dbReference type="UniProtKB" id="P42494"/>
    </source>
</evidence>
<evidence type="ECO:0000305" key="3"/>
<keyword id="KW-1015">Disulfide bond</keyword>
<keyword id="KW-0227">DNA damage</keyword>
<keyword id="KW-0234">DNA repair</keyword>
<keyword id="KW-0238">DNA-binding</keyword>
<keyword id="KW-0239">DNA-directed DNA polymerase</keyword>
<keyword id="KW-0460">Magnesium</keyword>
<keyword id="KW-0479">Metal-binding</keyword>
<keyword id="KW-0548">Nucleotidyltransferase</keyword>
<keyword id="KW-0808">Transferase</keyword>
<keyword id="KW-0946">Virion</keyword>
<dbReference type="EC" id="2.7.7.7" evidence="2"/>
<dbReference type="EMBL" id="AY261361">
    <property type="status" value="NOT_ANNOTATED_CDS"/>
    <property type="molecule type" value="Genomic_DNA"/>
</dbReference>
<dbReference type="BMRB" id="P0C984"/>
<dbReference type="SMR" id="P0C984"/>
<dbReference type="Proteomes" id="UP000000860">
    <property type="component" value="Segment"/>
</dbReference>
<dbReference type="GO" id="GO:0044423">
    <property type="term" value="C:virion component"/>
    <property type="evidence" value="ECO:0007669"/>
    <property type="project" value="UniProtKB-KW"/>
</dbReference>
<dbReference type="GO" id="GO:0003677">
    <property type="term" value="F:DNA binding"/>
    <property type="evidence" value="ECO:0007669"/>
    <property type="project" value="UniProtKB-KW"/>
</dbReference>
<dbReference type="GO" id="GO:0003887">
    <property type="term" value="F:DNA-directed DNA polymerase activity"/>
    <property type="evidence" value="ECO:0007669"/>
    <property type="project" value="UniProtKB-KW"/>
</dbReference>
<dbReference type="GO" id="GO:0046872">
    <property type="term" value="F:metal ion binding"/>
    <property type="evidence" value="ECO:0007669"/>
    <property type="project" value="UniProtKB-KW"/>
</dbReference>
<dbReference type="GO" id="GO:0006303">
    <property type="term" value="P:double-strand break repair via nonhomologous end joining"/>
    <property type="evidence" value="ECO:0007669"/>
    <property type="project" value="TreeGrafter"/>
</dbReference>
<dbReference type="FunFam" id="3.30.460.10:FF:000074">
    <property type="entry name" value="Repair DNA polymerase X"/>
    <property type="match status" value="1"/>
</dbReference>
<dbReference type="Gene3D" id="3.30.460.10">
    <property type="entry name" value="Beta Polymerase, domain 2"/>
    <property type="match status" value="1"/>
</dbReference>
<dbReference type="Gene3D" id="3.30.210.10">
    <property type="entry name" value="DNA polymerase, thumb domain"/>
    <property type="match status" value="1"/>
</dbReference>
<dbReference type="InterPro" id="IPR019843">
    <property type="entry name" value="DNA_pol-X_BS"/>
</dbReference>
<dbReference type="InterPro" id="IPR037160">
    <property type="entry name" value="DNA_Pol_thumb_sf"/>
</dbReference>
<dbReference type="InterPro" id="IPR022312">
    <property type="entry name" value="DNA_pol_X"/>
</dbReference>
<dbReference type="InterPro" id="IPR043519">
    <property type="entry name" value="NT_sf"/>
</dbReference>
<dbReference type="InterPro" id="IPR029398">
    <property type="entry name" value="PolB_thumb"/>
</dbReference>
<dbReference type="InterPro" id="IPR002934">
    <property type="entry name" value="Polymerase_NTP_transf_dom"/>
</dbReference>
<dbReference type="PANTHER" id="PTHR11276:SF28">
    <property type="entry name" value="DNA POLYMERASE LAMBDA"/>
    <property type="match status" value="1"/>
</dbReference>
<dbReference type="PANTHER" id="PTHR11276">
    <property type="entry name" value="DNA POLYMERASE TYPE-X FAMILY MEMBER"/>
    <property type="match status" value="1"/>
</dbReference>
<dbReference type="Pfam" id="PF14791">
    <property type="entry name" value="DNA_pol_B_thumb"/>
    <property type="match status" value="1"/>
</dbReference>
<dbReference type="Pfam" id="PF01909">
    <property type="entry name" value="NTP_transf_2"/>
    <property type="match status" value="1"/>
</dbReference>
<dbReference type="SUPFAM" id="SSF81301">
    <property type="entry name" value="Nucleotidyltransferase"/>
    <property type="match status" value="1"/>
</dbReference>
<dbReference type="PROSITE" id="PS00522">
    <property type="entry name" value="DNA_POLYMERASE_X"/>
    <property type="match status" value="1"/>
</dbReference>
<sequence length="174" mass="20330">MLTLIQGKKIVNYLRSRLAFEYNGQLIKILSKNIVAVGSLRREEKMLNDVDLLIIVPEKKCLKHVLPNIRIKGLSFSVKVCGERKCVLFIEWEKKTYQLDLFTALAEEKPYAIFHFTGPVSYLIRIRAALKKKNYKLNQYGLFKNQTLVPLKITTEKELIKELGFTYRIPKKRL</sequence>
<organismHost>
    <name type="scientific">Ornithodoros</name>
    <name type="common">relapsing fever ticks</name>
    <dbReference type="NCBI Taxonomy" id="6937"/>
</organismHost>
<organismHost>
    <name type="scientific">Phacochoerus aethiopicus</name>
    <name type="common">Warthog</name>
    <dbReference type="NCBI Taxonomy" id="85517"/>
</organismHost>
<organismHost>
    <name type="scientific">Phacochoerus africanus</name>
    <name type="common">Warthog</name>
    <dbReference type="NCBI Taxonomy" id="41426"/>
</organismHost>
<organismHost>
    <name type="scientific">Potamochoerus larvatus</name>
    <name type="common">Bushpig</name>
    <dbReference type="NCBI Taxonomy" id="273792"/>
</organismHost>
<organismHost>
    <name type="scientific">Sus scrofa</name>
    <name type="common">Pig</name>
    <dbReference type="NCBI Taxonomy" id="9823"/>
</organismHost>